<protein>
    <recommendedName>
        <fullName evidence="32">Solute carrier family 22 member 6</fullName>
    </recommendedName>
    <alternativeName>
        <fullName evidence="28">Organic anion transporter 1</fullName>
        <shortName evidence="28">hOAT1</shortName>
    </alternativeName>
    <alternativeName>
        <fullName evidence="35">PAH transporter</fullName>
        <shortName evidence="35">hPAHT</shortName>
    </alternativeName>
    <alternativeName>
        <fullName evidence="33">Renal organic anion transporter 1</fullName>
        <shortName evidence="33">hROAT1</shortName>
    </alternativeName>
</protein>
<evidence type="ECO:0000250" key="1">
    <source>
        <dbReference type="UniProtKB" id="O35956"/>
    </source>
</evidence>
<evidence type="ECO:0000250" key="2">
    <source>
        <dbReference type="UniProtKB" id="Q8VC69"/>
    </source>
</evidence>
<evidence type="ECO:0000255" key="3"/>
<evidence type="ECO:0000256" key="4">
    <source>
        <dbReference type="SAM" id="MobiDB-lite"/>
    </source>
</evidence>
<evidence type="ECO:0000269" key="5">
    <source>
    </source>
</evidence>
<evidence type="ECO:0000269" key="6">
    <source>
    </source>
</evidence>
<evidence type="ECO:0000269" key="7">
    <source>
    </source>
</evidence>
<evidence type="ECO:0000269" key="8">
    <source>
    </source>
</evidence>
<evidence type="ECO:0000269" key="9">
    <source>
    </source>
</evidence>
<evidence type="ECO:0000269" key="10">
    <source>
    </source>
</evidence>
<evidence type="ECO:0000269" key="11">
    <source>
    </source>
</evidence>
<evidence type="ECO:0000269" key="12">
    <source>
    </source>
</evidence>
<evidence type="ECO:0000269" key="13">
    <source>
    </source>
</evidence>
<evidence type="ECO:0000269" key="14">
    <source>
    </source>
</evidence>
<evidence type="ECO:0000269" key="15">
    <source>
    </source>
</evidence>
<evidence type="ECO:0000269" key="16">
    <source>
    </source>
</evidence>
<evidence type="ECO:0000269" key="17">
    <source>
    </source>
</evidence>
<evidence type="ECO:0000269" key="18">
    <source>
    </source>
</evidence>
<evidence type="ECO:0000269" key="19">
    <source>
    </source>
</evidence>
<evidence type="ECO:0000269" key="20">
    <source>
    </source>
</evidence>
<evidence type="ECO:0000269" key="21">
    <source>
    </source>
</evidence>
<evidence type="ECO:0000269" key="22">
    <source>
    </source>
</evidence>
<evidence type="ECO:0000269" key="23">
    <source>
    </source>
</evidence>
<evidence type="ECO:0000269" key="24">
    <source>
    </source>
</evidence>
<evidence type="ECO:0000269" key="25">
    <source>
    </source>
</evidence>
<evidence type="ECO:0000269" key="26">
    <source>
    </source>
</evidence>
<evidence type="ECO:0000269" key="27">
    <source ref="7"/>
</evidence>
<evidence type="ECO:0000303" key="28">
    <source>
    </source>
</evidence>
<evidence type="ECO:0000303" key="29">
    <source>
    </source>
</evidence>
<evidence type="ECO:0000303" key="30">
    <source>
    </source>
</evidence>
<evidence type="ECO:0000303" key="31">
    <source>
    </source>
</evidence>
<evidence type="ECO:0000303" key="32">
    <source>
    </source>
</evidence>
<evidence type="ECO:0000303" key="33">
    <source>
    </source>
</evidence>
<evidence type="ECO:0000303" key="34">
    <source>
    </source>
</evidence>
<evidence type="ECO:0000303" key="35">
    <source>
    </source>
</evidence>
<evidence type="ECO:0000305" key="36"/>
<evidence type="ECO:0000312" key="37">
    <source>
        <dbReference type="HGNC" id="HGNC:10970"/>
    </source>
</evidence>
<gene>
    <name evidence="37" type="primary">SLC22A6</name>
    <name type="synonym">OAT1</name>
    <name type="synonym">PAHT</name>
</gene>
<reference key="1">
    <citation type="journal article" date="1998" name="Kidney Blood Press. Res.">
        <title>Cloning of a human renal p-aminohippurate transporter, hROAT1.</title>
        <authorList>
            <person name="Reid G."/>
            <person name="Wolff N.A."/>
            <person name="Dautzenberg F.M."/>
            <person name="Burckhardt G."/>
        </authorList>
    </citation>
    <scope>NUCLEOTIDE SEQUENCE [MRNA] (ISOFORM 2)</scope>
    <scope>MISCELLANEOUS</scope>
</reference>
<reference key="2">
    <citation type="journal article" date="1999" name="Am. J. Physiol.">
        <title>Molecular cloning and functional expression of a multispecific organic anion transporter from human kidney.</title>
        <authorList>
            <person name="Hosoyamada M."/>
            <person name="Sekine T."/>
            <person name="Kanai Y."/>
            <person name="Endou H."/>
        </authorList>
    </citation>
    <scope>NUCLEOTIDE SEQUENCE [MRNA] (ISOFORMS 1 AND 2)</scope>
    <scope>FUNCTION</scope>
    <scope>SUBCELLULAR LOCATION</scope>
    <scope>TISSUE SPECIFICITY</scope>
    <scope>MISCELLANEOUS</scope>
    <source>
        <tissue>Kidney</tissue>
    </source>
</reference>
<reference key="3">
    <citation type="journal article" date="1999" name="Am. J. Physiol.">
        <title>Cloning of the human kidney PAH transporter: narrow substrate specificity and regulation by protein kinase C.</title>
        <authorList>
            <person name="Lu R."/>
            <person name="Chan B.S."/>
            <person name="Schuster V.L."/>
        </authorList>
    </citation>
    <scope>NUCLEOTIDE SEQUENCE [MRNA] (ISOFORM 2)</scope>
    <scope>FUNCTION</scope>
    <scope>TISSUE SPECIFICITY</scope>
    <source>
        <tissue>Kidney</tissue>
    </source>
</reference>
<reference key="4">
    <citation type="journal article" date="1999" name="Biochem. Biophys. Res. Commun.">
        <title>Molecular cloning and characterization of two novel human renal organic anion transporters (hOAT1 and hOAT3).</title>
        <authorList>
            <person name="Race J.E."/>
            <person name="Grassl S.M."/>
            <person name="Williams W.J."/>
            <person name="Holtzman E.J."/>
        </authorList>
    </citation>
    <scope>NUCLEOTIDE SEQUENCE [MRNA] (ISOFORM 2)</scope>
    <scope>TISSUE SPECIFICITY</scope>
    <source>
        <tissue>Kidney</tissue>
    </source>
</reference>
<reference key="5">
    <citation type="journal article" date="1999" name="Mol. Pharmacol.">
        <title>The antiviral nucleotide analogs cidofovir and adefovir are novel substrates for human and rat renal organic anion transporter 1.</title>
        <authorList>
            <person name="Cihlar T."/>
            <person name="Lin D.C."/>
            <person name="Pritchard J.B."/>
            <person name="Fuller M.D."/>
            <person name="Mendel D.B."/>
            <person name="Sweet D.H."/>
        </authorList>
    </citation>
    <scope>NUCLEOTIDE SEQUENCE [MRNA] (ISOFORM 2)</scope>
    <scope>GLYCOSYLATION</scope>
    <scope>TISSUE SPECIFICITY</scope>
    <scope>MISCELLANEOUS</scope>
    <source>
        <tissue>Kidney</tissue>
    </source>
</reference>
<reference key="6">
    <citation type="journal article" date="2000" name="Biochem. Biophys. Res. Commun.">
        <title>Genomic structure and in vivo expression of the human organic anion transporter 1 (hOAT1) gene.</title>
        <authorList>
            <person name="Bahn A."/>
            <person name="Prawitt D."/>
            <person name="Buttler D."/>
            <person name="Reid G."/>
            <person name="Enklaar T."/>
            <person name="Wolff N.A."/>
            <person name="Ebbinghaus C."/>
            <person name="Hillemann A."/>
            <person name="Schulten H.-J."/>
            <person name="Gunawan B."/>
            <person name="Fuezesi L."/>
            <person name="Zabel B."/>
            <person name="Burckhardt G."/>
        </authorList>
    </citation>
    <scope>NUCLEOTIDE SEQUENCE [GENOMIC DNA / MRNA] (ISOFORMS 3 AND 4)</scope>
    <scope>TISSUE SPECIFICITY</scope>
    <source>
        <tissue>Kidney</tissue>
    </source>
</reference>
<reference key="7">
    <citation type="submission" date="2008-03" db="EMBL/GenBank/DDBJ databases">
        <authorList>
            <consortium name="NIEHS SNPs program"/>
        </authorList>
    </citation>
    <scope>NUCLEOTIDE SEQUENCE [GENOMIC DNA]</scope>
    <scope>VARIANT LEU-104</scope>
</reference>
<reference key="8">
    <citation type="journal article" date="2006" name="Nature">
        <title>Human chromosome 11 DNA sequence and analysis including novel gene identification.</title>
        <authorList>
            <person name="Taylor T.D."/>
            <person name="Noguchi H."/>
            <person name="Totoki Y."/>
            <person name="Toyoda A."/>
            <person name="Kuroki Y."/>
            <person name="Dewar K."/>
            <person name="Lloyd C."/>
            <person name="Itoh T."/>
            <person name="Takeda T."/>
            <person name="Kim D.-W."/>
            <person name="She X."/>
            <person name="Barlow K.F."/>
            <person name="Bloom T."/>
            <person name="Bruford E."/>
            <person name="Chang J.L."/>
            <person name="Cuomo C.A."/>
            <person name="Eichler E."/>
            <person name="FitzGerald M.G."/>
            <person name="Jaffe D.B."/>
            <person name="LaButti K."/>
            <person name="Nicol R."/>
            <person name="Park H.-S."/>
            <person name="Seaman C."/>
            <person name="Sougnez C."/>
            <person name="Yang X."/>
            <person name="Zimmer A.R."/>
            <person name="Zody M.C."/>
            <person name="Birren B.W."/>
            <person name="Nusbaum C."/>
            <person name="Fujiyama A."/>
            <person name="Hattori M."/>
            <person name="Rogers J."/>
            <person name="Lander E.S."/>
            <person name="Sakaki Y."/>
        </authorList>
    </citation>
    <scope>NUCLEOTIDE SEQUENCE [LARGE SCALE GENOMIC DNA]</scope>
</reference>
<reference key="9">
    <citation type="submission" date="2005-07" db="EMBL/GenBank/DDBJ databases">
        <authorList>
            <person name="Mural R.J."/>
            <person name="Istrail S."/>
            <person name="Sutton G.G."/>
            <person name="Florea L."/>
            <person name="Halpern A.L."/>
            <person name="Mobarry C.M."/>
            <person name="Lippert R."/>
            <person name="Walenz B."/>
            <person name="Shatkay H."/>
            <person name="Dew I."/>
            <person name="Miller J.R."/>
            <person name="Flanigan M.J."/>
            <person name="Edwards N.J."/>
            <person name="Bolanos R."/>
            <person name="Fasulo D."/>
            <person name="Halldorsson B.V."/>
            <person name="Hannenhalli S."/>
            <person name="Turner R."/>
            <person name="Yooseph S."/>
            <person name="Lu F."/>
            <person name="Nusskern D.R."/>
            <person name="Shue B.C."/>
            <person name="Zheng X.H."/>
            <person name="Zhong F."/>
            <person name="Delcher A.L."/>
            <person name="Huson D.H."/>
            <person name="Kravitz S.A."/>
            <person name="Mouchard L."/>
            <person name="Reinert K."/>
            <person name="Remington K.A."/>
            <person name="Clark A.G."/>
            <person name="Waterman M.S."/>
            <person name="Eichler E.E."/>
            <person name="Adams M.D."/>
            <person name="Hunkapiller M.W."/>
            <person name="Myers E.W."/>
            <person name="Venter J.C."/>
        </authorList>
    </citation>
    <scope>NUCLEOTIDE SEQUENCE [LARGE SCALE GENOMIC DNA]</scope>
</reference>
<reference key="10">
    <citation type="journal article" date="2004" name="Genome Res.">
        <title>The status, quality, and expansion of the NIH full-length cDNA project: the Mammalian Gene Collection (MGC).</title>
        <authorList>
            <consortium name="The MGC Project Team"/>
        </authorList>
    </citation>
    <scope>NUCLEOTIDE SEQUENCE [LARGE SCALE MRNA] (ISOFORM 2)</scope>
    <source>
        <tissue>Colon</tissue>
    </source>
</reference>
<reference key="11">
    <citation type="journal article" date="2002" name="J. Pharmacol. Exp. Ther.">
        <title>Human organic anion transporters and human organic cation transporters mediate renal transport of prostaglandins.</title>
        <authorList>
            <person name="Kimura H."/>
            <person name="Takeda M."/>
            <person name="Narikawa S."/>
            <person name="Enomoto A."/>
            <person name="Ichida K."/>
            <person name="Endou H."/>
        </authorList>
    </citation>
    <scope>FUNCTION</scope>
    <scope>TRANSPORTER ACTIVITY</scope>
    <scope>BIOPHYSICOCHEMICAL PROPERTIES</scope>
</reference>
<reference key="12">
    <citation type="journal article" date="2003" name="J. Pharmacol. Exp. Ther.">
        <title>Interaction of cysteine conjugates with human and rabbit organic anion transporter 1.</title>
        <authorList>
            <person name="Groves C.E."/>
            <person name="Munoz L."/>
            <person name="Bahn A."/>
            <person name="Burckhardt G."/>
            <person name="Wright S.H."/>
        </authorList>
    </citation>
    <scope>MISCELLANEOUS</scope>
</reference>
<reference key="13">
    <citation type="journal article" date="2001" name="Life Sci.">
        <title>Characterization of ochratoxin A transport by human organic anion transporters.</title>
        <authorList>
            <person name="Jung K.Y."/>
            <person name="Takeda M."/>
            <person name="Kim D.K."/>
            <person name="Tojo A."/>
            <person name="Narikawa S."/>
            <person name="Yoo B.S."/>
            <person name="Hosoyamada M."/>
            <person name="Cha S.H."/>
            <person name="Sekine T."/>
            <person name="Endou H."/>
        </authorList>
    </citation>
    <scope>FUNCTION</scope>
    <scope>BIOPHYSICOCHEMICAL PROPERTIES</scope>
</reference>
<reference key="14">
    <citation type="journal article" date="2004" name="J. Biol. Chem.">
        <title>Role of glycosylation in the organic anion transporter OAT1.</title>
        <authorList>
            <person name="Tanaka K."/>
            <person name="Xu W."/>
            <person name="Zhou F."/>
            <person name="You G."/>
        </authorList>
    </citation>
    <scope>MUTAGENESIS OF ASN-39</scope>
    <scope>GLYCOSYLATION AT ASN-39; ASN-56; ASN-92 AND ASN-97</scope>
</reference>
<reference key="15">
    <citation type="journal article" date="2004" name="J. Biol. Chem.">
        <title>Critical amino acid residues in transmembrane domain 1 of the human organic anion transporter hOAT1.</title>
        <authorList>
            <person name="Hong M."/>
            <person name="Zhou F."/>
            <person name="You G."/>
        </authorList>
    </citation>
    <scope>MUTAGENESIS OF LEU-30 AND THR-36</scope>
</reference>
<reference key="16">
    <citation type="journal article" date="2004" name="Kidney Int.">
        <title>Characterization of uremic toxin transport by organic anion transporters in the kidney.</title>
        <authorList>
            <person name="Deguchi T."/>
            <person name="Kusuhara H."/>
            <person name="Takadate A."/>
            <person name="Endou H."/>
            <person name="Otagiri M."/>
            <person name="Sugiyama Y."/>
        </authorList>
    </citation>
    <scope>FUNCTION</scope>
    <scope>TRANSPORTER ACTIVITY</scope>
    <scope>BIOPHYSICOCHEMICAL PROPERTIES</scope>
</reference>
<reference key="17">
    <citation type="journal article" date="2005" name="J. Pharmacol. Exp. Ther.">
        <title>Transport of the natural sweetener stevioside and its aglycone steviol by human organic anion transporter (hOAT1; SLC22A6) and hOAT3 (SLC22A8).</title>
        <authorList>
            <person name="Srimaroeng C."/>
            <person name="Chatsudthipong V."/>
            <person name="Aslamkhan A.G."/>
            <person name="Pritchard J.B."/>
        </authorList>
    </citation>
    <scope>MISCELLANEOUS</scope>
</reference>
<reference key="18">
    <citation type="journal article" date="2006" name="J. Biol. Chem.">
        <title>A three-dimensional model of human organic anion transporter 1: aromatic amino acids required for substrate transport.</title>
        <authorList>
            <person name="Perry J.L."/>
            <person name="Dembla-Rajpal N."/>
            <person name="Hall L.A."/>
            <person name="Pritchard J.B."/>
        </authorList>
    </citation>
    <scope>MUTAGENESIS OF TYR-230; LYS-431 AND PHE-438</scope>
    <scope>SUBSTRATE-BINDING SITES</scope>
    <scope>MISCELLANEOUS</scope>
</reference>
<reference key="19">
    <citation type="journal article" date="2007" name="Drug Metab. Dispos.">
        <title>Human organic anion transporters 1 (hOAT1/SLC22A6) and 3 (hOAT3/SLC22A8) transport edaravone (MCI-186; 3-methyl-1-phenyl-2-pyrazolin-5-one) and its sulfate conjugate.</title>
        <authorList>
            <person name="Mizuno N."/>
            <person name="Takahashi T."/>
            <person name="Iwase Y."/>
            <person name="Kusuhara H."/>
            <person name="Niwa T."/>
            <person name="Sugiyama Y."/>
        </authorList>
    </citation>
    <scope>MISCELLANEOUS</scope>
</reference>
<reference key="20">
    <citation type="journal article" date="2012" name="Pharmacol. Res.">
        <title>Interaction and transport of kynurenic acid via human organic anion transporters hOAT1 and hOAT3.</title>
        <authorList>
            <person name="Uwai Y."/>
            <person name="Honjo H."/>
            <person name="Iwamoto K."/>
        </authorList>
    </citation>
    <scope>FUNCTION</scope>
    <scope>TRANSPORTER ACTIVITY</scope>
    <scope>BIOPHYSICOCHEMICAL PROPERTIES</scope>
</reference>
<reference key="21">
    <citation type="journal article" date="2013" name="Biosci. Biotechnol. Biochem.">
        <title>Transport of xanthurenic acid by rat/human organic anion transporters OAT1 and OAT3.</title>
        <authorList>
            <person name="Uwai Y."/>
            <person name="Honjo E."/>
        </authorList>
    </citation>
    <scope>FUNCTION</scope>
    <scope>TRANSPORTER ACTIVITY</scope>
    <scope>BIOPHYSICOCHEMICAL PROPERTIES</scope>
    <scope>MISCELLANEOUS</scope>
</reference>
<reference key="22">
    <citation type="journal article" date="2015" name="Am. J. Physiol.">
        <title>Human organic anion transporter 2 is distinct from organic anion transporters 1 and 3 with respect to transport function.</title>
        <authorList>
            <person name="Henjakovic M."/>
            <person name="Hagos Y."/>
            <person name="Krick W."/>
            <person name="Burckhardt G."/>
            <person name="Burckhardt B.C."/>
        </authorList>
    </citation>
    <scope>FUNCTION</scope>
    <scope>TRANSPORTER ACTIVITY</scope>
    <scope>MISCELLANEOUS</scope>
</reference>
<reference key="23">
    <citation type="journal article" date="2017" name="Mol. Cell. Biochem.">
        <title>Organic anion transporters, OAT1 and OAT3, are crucial biopterin transporters involved in bodily distribution of tetrahydrobiopterin and exclusion of its excess.</title>
        <authorList>
            <person name="Ohashi A."/>
            <person name="Mamada K."/>
            <person name="Harada T."/>
            <person name="Naito M."/>
            <person name="Takahashi T."/>
            <person name="Aizawa S."/>
            <person name="Hasegawa H."/>
        </authorList>
    </citation>
    <scope>FUNCTION</scope>
    <scope>TRANSPORTER ACTIVITY</scope>
</reference>
<reference key="24">
    <citation type="journal article" date="2022" name="Drug Metab. Dispos.">
        <title>Localization of Xenobiotic Transporters Expressed at the Human Blood-Testis Barrier.</title>
        <authorList>
            <person name="Hau R.K."/>
            <person name="Klein R.R."/>
            <person name="Wright S.H."/>
            <person name="Cherrington N.J."/>
        </authorList>
    </citation>
    <scope>FUNCTION</scope>
    <scope>SUBCELLULAR LOCATION</scope>
    <scope>TISSUE SPECIFICITY</scope>
</reference>
<reference key="25">
    <citation type="journal article" date="2005" name="J. Pharmacol. Exp. Ther.">
        <title>Functional consequences of single nucleotide polymorphisms in the human organic anion transporter hOAT1 (SLC22A6).</title>
        <authorList>
            <person name="Bleasby K."/>
            <person name="Hall L.A."/>
            <person name="Perry J.L."/>
            <person name="Mohrenweiser H.W."/>
            <person name="Pritchard J.B."/>
        </authorList>
    </citation>
    <scope>VARIANT HIS-50</scope>
    <scope>CHARACTERIZATION OF VARIANT HIS-50</scope>
    <scope>MISCELLANEOUS</scope>
</reference>
<reference key="26">
    <citation type="journal article" date="2005" name="Kidney Int.">
        <title>Analyses of coding region polymorphisms in apical and basolateral human organic anion transporter (OAT) genes [OAT1 (NKT), OAT2, OAT3, OAT4, URAT (RST)].</title>
        <authorList>
            <person name="Xu G."/>
            <person name="Bhatnagar V."/>
            <person name="Wen G."/>
            <person name="Hamilton B.A."/>
            <person name="Eraly S.A."/>
            <person name="Nigam S.K."/>
        </authorList>
    </citation>
    <scope>VARIANTS PRO-7 AND HIS-50</scope>
</reference>
<accession>Q4U2R8</accession>
<accession>A8MY93</accession>
<accession>B2D0R6</accession>
<accession>O95187</accession>
<accession>O95742</accession>
<accession>Q7LDA0</accession>
<accession>Q8N192</accession>
<accession>Q9NQA6</accession>
<accession>Q9NQC2</accession>
<accession>Q9UBG6</accession>
<accession>Q9UEQ8</accession>
<dbReference type="EMBL" id="AF057039">
    <property type="protein sequence ID" value="AAC70004.1"/>
    <property type="molecule type" value="mRNA"/>
</dbReference>
<dbReference type="EMBL" id="AB009697">
    <property type="protein sequence ID" value="BAA75072.1"/>
    <property type="molecule type" value="mRNA"/>
</dbReference>
<dbReference type="EMBL" id="AB009698">
    <property type="protein sequence ID" value="BAA75073.1"/>
    <property type="molecule type" value="mRNA"/>
</dbReference>
<dbReference type="EMBL" id="AF104038">
    <property type="protein sequence ID" value="AAD10052.1"/>
    <property type="molecule type" value="mRNA"/>
</dbReference>
<dbReference type="EMBL" id="AF097490">
    <property type="protein sequence ID" value="AAD19356.1"/>
    <property type="molecule type" value="mRNA"/>
</dbReference>
<dbReference type="EMBL" id="AF124373">
    <property type="protein sequence ID" value="AAD55356.1"/>
    <property type="molecule type" value="mRNA"/>
</dbReference>
<dbReference type="EMBL" id="AJ249369">
    <property type="protein sequence ID" value="CAB77184.1"/>
    <property type="molecule type" value="Genomic_DNA"/>
</dbReference>
<dbReference type="EMBL" id="AJ251529">
    <property type="protein sequence ID" value="CAB94830.1"/>
    <property type="molecule type" value="mRNA"/>
</dbReference>
<dbReference type="EMBL" id="AJ271205">
    <property type="protein sequence ID" value="CAB97249.1"/>
    <property type="molecule type" value="mRNA"/>
</dbReference>
<dbReference type="EMBL" id="EU567146">
    <property type="protein sequence ID" value="ACB21049.1"/>
    <property type="molecule type" value="Genomic_DNA"/>
</dbReference>
<dbReference type="EMBL" id="AP001858">
    <property type="status" value="NOT_ANNOTATED_CDS"/>
    <property type="molecule type" value="Genomic_DNA"/>
</dbReference>
<dbReference type="EMBL" id="CH471076">
    <property type="protein sequence ID" value="EAW74129.1"/>
    <property type="molecule type" value="Genomic_DNA"/>
</dbReference>
<dbReference type="EMBL" id="CH471076">
    <property type="protein sequence ID" value="EAW74130.1"/>
    <property type="molecule type" value="Genomic_DNA"/>
</dbReference>
<dbReference type="EMBL" id="CH471076">
    <property type="protein sequence ID" value="EAW74131.1"/>
    <property type="molecule type" value="Genomic_DNA"/>
</dbReference>
<dbReference type="EMBL" id="CH471076">
    <property type="protein sequence ID" value="EAW74132.1"/>
    <property type="molecule type" value="Genomic_DNA"/>
</dbReference>
<dbReference type="EMBL" id="BC033682">
    <property type="protein sequence ID" value="AAH33682.1"/>
    <property type="molecule type" value="mRNA"/>
</dbReference>
<dbReference type="CCDS" id="CCDS31591.1">
    <molecule id="Q4U2R8-1"/>
</dbReference>
<dbReference type="CCDS" id="CCDS44631.1">
    <molecule id="Q4U2R8-4"/>
</dbReference>
<dbReference type="CCDS" id="CCDS44632.1">
    <molecule id="Q4U2R8-3"/>
</dbReference>
<dbReference type="CCDS" id="CCDS8041.1">
    <molecule id="Q4U2R8-2"/>
</dbReference>
<dbReference type="RefSeq" id="NP_004781.2">
    <molecule id="Q4U2R8-1"/>
    <property type="nucleotide sequence ID" value="NM_004790.4"/>
</dbReference>
<dbReference type="RefSeq" id="NP_695008.1">
    <molecule id="Q4U2R8-2"/>
    <property type="nucleotide sequence ID" value="NM_153276.3"/>
</dbReference>
<dbReference type="RefSeq" id="NP_695009.1">
    <molecule id="Q4U2R8-3"/>
    <property type="nucleotide sequence ID" value="NM_153277.3"/>
</dbReference>
<dbReference type="RefSeq" id="NP_695010.1">
    <molecule id="Q4U2R8-4"/>
    <property type="nucleotide sequence ID" value="NM_153278.3"/>
</dbReference>
<dbReference type="SMR" id="Q4U2R8"/>
<dbReference type="BioGRID" id="114759">
    <property type="interactions" value="37"/>
</dbReference>
<dbReference type="CORUM" id="Q4U2R8"/>
<dbReference type="FunCoup" id="Q4U2R8">
    <property type="interactions" value="65"/>
</dbReference>
<dbReference type="IntAct" id="Q4U2R8">
    <property type="interactions" value="23"/>
</dbReference>
<dbReference type="STRING" id="9606.ENSP00000367102"/>
<dbReference type="BindingDB" id="Q4U2R8"/>
<dbReference type="ChEMBL" id="CHEMBL1641347"/>
<dbReference type="DrugBank" id="DB00659">
    <property type="generic name" value="Acamprosate"/>
</dbReference>
<dbReference type="DrugBank" id="DB00819">
    <property type="generic name" value="Acetazolamide"/>
</dbReference>
<dbReference type="DrugBank" id="DB06151">
    <property type="generic name" value="Acetylcysteine"/>
</dbReference>
<dbReference type="DrugBank" id="DB00945">
    <property type="generic name" value="Acetylsalicylic acid"/>
</dbReference>
<dbReference type="DrugBank" id="DB00787">
    <property type="generic name" value="Acyclovir"/>
</dbReference>
<dbReference type="DrugBank" id="DB00718">
    <property type="generic name" value="Adefovir dipivoxil"/>
</dbReference>
<dbReference type="DrugBank" id="DB00770">
    <property type="generic name" value="Alprostadil"/>
</dbReference>
<dbReference type="DrugBank" id="DB00345">
    <property type="generic name" value="Aminohippuric acid"/>
</dbReference>
<dbReference type="DrugBank" id="DB01424">
    <property type="generic name" value="Aminophenazone"/>
</dbReference>
<dbReference type="DrugBank" id="DB01060">
    <property type="generic name" value="Amoxicillin"/>
</dbReference>
<dbReference type="DrugBank" id="DB01435">
    <property type="generic name" value="Antipyrine"/>
</dbReference>
<dbReference type="DrugBank" id="DB00168">
    <property type="generic name" value="Aspartame"/>
</dbReference>
<dbReference type="DrugBank" id="DB05016">
    <property type="generic name" value="Ataluren"/>
</dbReference>
<dbReference type="DrugBank" id="DB16098">
    <property type="generic name" value="Atogepant"/>
</dbReference>
<dbReference type="DrugBank" id="DB11817">
    <property type="generic name" value="Baricitinib"/>
</dbReference>
<dbReference type="DrugBank" id="DB01053">
    <property type="generic name" value="Benzylpenicillin"/>
</dbReference>
<dbReference type="DrugBank" id="DB12151">
    <property type="generic name" value="Brincidofovir"/>
</dbReference>
<dbReference type="DrugBank" id="DB01237">
    <property type="generic name" value="Bromodiphenhydramine"/>
</dbReference>
<dbReference type="DrugBank" id="DB00887">
    <property type="generic name" value="Bumetanide"/>
</dbReference>
<dbReference type="DrugBank" id="DB11751">
    <property type="generic name" value="Cabotegravir"/>
</dbReference>
<dbReference type="DrugBank" id="DB04519">
    <property type="generic name" value="Caprylic acid"/>
</dbReference>
<dbReference type="DrugBank" id="DB01197">
    <property type="generic name" value="Captopril"/>
</dbReference>
<dbReference type="DrugBank" id="DB00578">
    <property type="generic name" value="Carbenicillin"/>
</dbReference>
<dbReference type="DrugBank" id="DB00821">
    <property type="generic name" value="Carprofen"/>
</dbReference>
<dbReference type="DrugBank" id="DB00520">
    <property type="generic name" value="Caspofungin"/>
</dbReference>
<dbReference type="DrugBank" id="DB01414">
    <property type="generic name" value="Cefacetrile"/>
</dbReference>
<dbReference type="DrugBank" id="DB01140">
    <property type="generic name" value="Cefadroxil"/>
</dbReference>
<dbReference type="DrugBank" id="DB09008">
    <property type="generic name" value="Cefaloridine"/>
</dbReference>
<dbReference type="DrugBank" id="DB00456">
    <property type="generic name" value="Cefalotin"/>
</dbReference>
<dbReference type="DrugBank" id="DB01326">
    <property type="generic name" value="Cefamandole"/>
</dbReference>
<dbReference type="DrugBank" id="DB01327">
    <property type="generic name" value="Cefazolin"/>
</dbReference>
<dbReference type="DrugBank" id="DB00535">
    <property type="generic name" value="Cefdinir"/>
</dbReference>
<dbReference type="DrugBank" id="DB01329">
    <property type="generic name" value="Cefoperazone"/>
</dbReference>
<dbReference type="DrugBank" id="DB00493">
    <property type="generic name" value="Cefotaxime"/>
</dbReference>
<dbReference type="DrugBank" id="DB00229">
    <property type="generic name" value="Cefotiam"/>
</dbReference>
<dbReference type="DrugBank" id="DB01333">
    <property type="generic name" value="Cefradine"/>
</dbReference>
<dbReference type="DrugBank" id="DB00438">
    <property type="generic name" value="Ceftazidime"/>
</dbReference>
<dbReference type="DrugBank" id="DB01415">
    <property type="generic name" value="Ceftibuten"/>
</dbReference>
<dbReference type="DrugBank" id="DB01332">
    <property type="generic name" value="Ceftizoxime"/>
</dbReference>
<dbReference type="DrugBank" id="DB01212">
    <property type="generic name" value="Ceftriaxone"/>
</dbReference>
<dbReference type="DrugBank" id="DB00567">
    <property type="generic name" value="Cephalexin"/>
</dbReference>
<dbReference type="DrugBank" id="DB00446">
    <property type="generic name" value="Chloramphenicol"/>
</dbReference>
<dbReference type="DrugBank" id="DB00880">
    <property type="generic name" value="Chlorothiazide"/>
</dbReference>
<dbReference type="DrugBank" id="DB00672">
    <property type="generic name" value="Chlorpropamide"/>
</dbReference>
<dbReference type="DrugBank" id="DB00369">
    <property type="generic name" value="Cidofovir"/>
</dbReference>
<dbReference type="DrugBank" id="DB01597">
    <property type="generic name" value="Cilastatin"/>
</dbReference>
<dbReference type="DrugBank" id="DB00501">
    <property type="generic name" value="Cimetidine"/>
</dbReference>
<dbReference type="DrugBank" id="DB00827">
    <property type="generic name" value="Cinoxacin"/>
</dbReference>
<dbReference type="DrugBank" id="DB00155">
    <property type="generic name" value="Citrulline"/>
</dbReference>
<dbReference type="DrugBank" id="DB00286">
    <property type="generic name" value="Conjugated estrogens"/>
</dbReference>
<dbReference type="DrugBank" id="DB02527">
    <property type="generic name" value="Cyclic adenosine monophosphate"/>
</dbReference>
<dbReference type="DrugBank" id="DB02315">
    <property type="generic name" value="Cyclic GMP"/>
</dbReference>
<dbReference type="DrugBank" id="DB00091">
    <property type="generic name" value="Cyclosporine"/>
</dbReference>
<dbReference type="DrugBank" id="DB00606">
    <property type="generic name" value="Cyclothiazide"/>
</dbReference>
<dbReference type="DrugBank" id="DB08912">
    <property type="generic name" value="Dabrafenib"/>
</dbReference>
<dbReference type="DrugBank" id="DB11682">
    <property type="generic name" value="Daprodustat"/>
</dbReference>
<dbReference type="DrugBank" id="DB04133">
    <property type="generic name" value="Degraded Cephaloridine"/>
</dbReference>
<dbReference type="DrugBank" id="DB09213">
    <property type="generic name" value="Dexibuprofen"/>
</dbReference>
<dbReference type="DrugBank" id="DB00586">
    <property type="generic name" value="Diclofenac"/>
</dbReference>
<dbReference type="DrugBank" id="DB00900">
    <property type="generic name" value="Didanosine"/>
</dbReference>
<dbReference type="DrugBank" id="DB00861">
    <property type="generic name" value="Diflunisal"/>
</dbReference>
<dbReference type="DrugBank" id="DB01160">
    <property type="generic name" value="Dinoprost tromethamine"/>
</dbReference>
<dbReference type="DrugBank" id="DB00917">
    <property type="generic name" value="Dinoprostone"/>
</dbReference>
<dbReference type="DrugBank" id="DB08930">
    <property type="generic name" value="Dolutegravir"/>
</dbReference>
<dbReference type="DrugBank" id="DB00254">
    <property type="generic name" value="Doxycycline"/>
</dbReference>
<dbReference type="DrugBank" id="DB16704">
    <property type="generic name" value="Durlobactam"/>
</dbReference>
<dbReference type="DrugBank" id="DB12243">
    <property type="generic name" value="Edaravone"/>
</dbReference>
<dbReference type="DrugBank" id="DB08846">
    <property type="generic name" value="Ellagic acid"/>
</dbReference>
<dbReference type="DrugBank" id="DB00584">
    <property type="generic name" value="Enalapril"/>
</dbReference>
<dbReference type="DrugBank" id="DB13874">
    <property type="generic name" value="Enasidenib"/>
</dbReference>
<dbReference type="DrugBank" id="DB11718">
    <property type="generic name" value="Encorafenib"/>
</dbReference>
<dbReference type="DrugBank" id="DB00903">
    <property type="generic name" value="Etacrynic acid"/>
</dbReference>
<dbReference type="DrugBank" id="DB00311">
    <property type="generic name" value="Ethoxzolamide"/>
</dbReference>
<dbReference type="DrugBank" id="DB00749">
    <property type="generic name" value="Etodolac"/>
</dbReference>
<dbReference type="DrugBank" id="DB00927">
    <property type="generic name" value="Famotidine"/>
</dbReference>
<dbReference type="DrugBank" id="DB12466">
    <property type="generic name" value="Favipiravir"/>
</dbReference>
<dbReference type="DrugBank" id="DB12265">
    <property type="generic name" value="Fexinidazole"/>
</dbReference>
<dbReference type="DrugBank" id="DB02266">
    <property type="generic name" value="Flufenamic acid"/>
</dbReference>
<dbReference type="DrugBank" id="DB00693">
    <property type="generic name" value="Fluorescein"/>
</dbReference>
<dbReference type="DrugBank" id="DB00712">
    <property type="generic name" value="Flurbiprofen"/>
</dbReference>
<dbReference type="DrugBank" id="DB00158">
    <property type="generic name" value="Folic acid"/>
</dbReference>
<dbReference type="DrugBank" id="DB00529">
    <property type="generic name" value="Foscarnet"/>
</dbReference>
<dbReference type="DrugBank" id="DB16628">
    <property type="generic name" value="Fosdenopterin"/>
</dbReference>
<dbReference type="DrugBank" id="DB00695">
    <property type="generic name" value="Furosemide"/>
</dbReference>
<dbReference type="DrugBank" id="DB01004">
    <property type="generic name" value="Ganciclovir"/>
</dbReference>
<dbReference type="DrugBank" id="DB03553">
    <property type="generic name" value="Glutaric Acid"/>
</dbReference>
<dbReference type="DrugBank" id="DB01016">
    <property type="generic name" value="Glyburide"/>
</dbReference>
<dbReference type="DrugBank" id="DB00365">
    <property type="generic name" value="Grepafloxacin"/>
</dbReference>
<dbReference type="DrugBank" id="DB08843">
    <property type="generic name" value="GS 0573"/>
</dbReference>
<dbReference type="DrugBank" id="DB00999">
    <property type="generic name" value="Hydrochlorothiazide"/>
</dbReference>
<dbReference type="DrugBank" id="DB00774">
    <property type="generic name" value="Hydroflumethiazide"/>
</dbReference>
<dbReference type="DrugBank" id="DB01050">
    <property type="generic name" value="Ibuprofen"/>
</dbReference>
<dbReference type="DrugBank" id="DB00328">
    <property type="generic name" value="Indomethacin"/>
</dbReference>
<dbReference type="DrugBank" id="DB11757">
    <property type="generic name" value="Istradefylline"/>
</dbReference>
<dbReference type="DrugBank" id="DB01009">
    <property type="generic name" value="Ketoprofen"/>
</dbReference>
<dbReference type="DrugBank" id="DB16956">
    <property type="generic name" value="L-Acetylleucine"/>
</dbReference>
<dbReference type="DrugBank" id="DB00709">
    <property type="generic name" value="Lamivudine"/>
</dbReference>
<dbReference type="DrugBank" id="DB00654">
    <property type="generic name" value="Latanoprost"/>
</dbReference>
<dbReference type="DrugBank" id="DB09078">
    <property type="generic name" value="Lenvatinib"/>
</dbReference>
<dbReference type="DrugBank" id="DB00601">
    <property type="generic name" value="Linezolid"/>
</dbReference>
<dbReference type="DrugBank" id="DB17083">
    <property type="generic name" value="Linzagolix"/>
</dbReference>
<dbReference type="DrugBank" id="DB00678">
    <property type="generic name" value="Losartan"/>
</dbReference>
<dbReference type="DrugBank" id="DB00939">
    <property type="generic name" value="Meclofenamic acid"/>
</dbReference>
<dbReference type="DrugBank" id="DB00703">
    <property type="generic name" value="Methazolamide"/>
</dbReference>
<dbReference type="DrugBank" id="DB00563">
    <property type="generic name" value="Methotrexate"/>
</dbReference>
<dbReference type="DrugBank" id="DB01017">
    <property type="generic name" value="Minocycline"/>
</dbReference>
<dbReference type="DrugBank" id="DB00607">
    <property type="generic name" value="Nafcillin"/>
</dbReference>
<dbReference type="DrugBank" id="DB00779">
    <property type="generic name" value="Nalidixic acid"/>
</dbReference>
<dbReference type="DrugBank" id="DB00788">
    <property type="generic name" value="Naproxen"/>
</dbReference>
<dbReference type="DrugBank" id="DB00731">
    <property type="generic name" value="Nateglinide"/>
</dbReference>
<dbReference type="DrugBank" id="DB01059">
    <property type="generic name" value="Norfloxacin"/>
</dbReference>
<dbReference type="DrugBank" id="DB01051">
    <property type="generic name" value="Novobiocin"/>
</dbReference>
<dbReference type="DrugBank" id="DB01165">
    <property type="generic name" value="Ofloxacin"/>
</dbReference>
<dbReference type="DrugBank" id="DB01250">
    <property type="generic name" value="Olsalazine"/>
</dbReference>
<dbReference type="DrugBank" id="DB12513">
    <property type="generic name" value="Omaveloxolone"/>
</dbReference>
<dbReference type="DrugBank" id="DB11837">
    <property type="generic name" value="Osilodrostat"/>
</dbReference>
<dbReference type="DrugBank" id="DB03585">
    <property type="generic name" value="Oxyphenbutazone"/>
</dbReference>
<dbReference type="DrugBank" id="DB00595">
    <property type="generic name" value="Oxytetracycline"/>
</dbReference>
<dbReference type="DrugBank" id="DB15413">
    <property type="generic name" value="Pafolacianine"/>
</dbReference>
<dbReference type="DrugBank" id="DB00642">
    <property type="generic name" value="Pemetrexed"/>
</dbReference>
<dbReference type="DrugBank" id="DB03783">
    <property type="generic name" value="Phenacetin"/>
</dbReference>
<dbReference type="DrugBank" id="DB00812">
    <property type="generic name" value="Phenylbutazone"/>
</dbReference>
<dbReference type="DrugBank" id="DB00319">
    <property type="generic name" value="Piperacillin"/>
</dbReference>
<dbReference type="DrugBank" id="DB00554">
    <property type="generic name" value="Piroxicam"/>
</dbReference>
<dbReference type="DrugBank" id="DB01324">
    <property type="generic name" value="Polythiazide"/>
</dbReference>
<dbReference type="DrugBank" id="DB15822">
    <property type="generic name" value="Pralsetinib"/>
</dbReference>
<dbReference type="DrugBank" id="DB00175">
    <property type="generic name" value="Pravastatin"/>
</dbReference>
<dbReference type="DrugBank" id="DB01032">
    <property type="generic name" value="Probenecid"/>
</dbReference>
<dbReference type="DrugBank" id="DB18515">
    <property type="generic name" value="Revumenib"/>
</dbReference>
<dbReference type="DrugBank" id="DB00140">
    <property type="generic name" value="Riboflavin"/>
</dbReference>
<dbReference type="DrugBank" id="DB01045">
    <property type="generic name" value="Rifampin"/>
</dbReference>
<dbReference type="DrugBank" id="DB06176">
    <property type="generic name" value="Romidepsin"/>
</dbReference>
<dbReference type="DrugBank" id="DB04847">
    <property type="generic name" value="Roxadustat"/>
</dbReference>
<dbReference type="DrugBank" id="DB12332">
    <property type="generic name" value="Rucaparib"/>
</dbReference>
<dbReference type="DrugBank" id="DB00936">
    <property type="generic name" value="Salicylic acid"/>
</dbReference>
<dbReference type="DrugBank" id="DB09298">
    <property type="generic name" value="Silibinin"/>
</dbReference>
<dbReference type="DrugBank" id="DB00649">
    <property type="generic name" value="Stavudine"/>
</dbReference>
<dbReference type="DrugBank" id="DB09324">
    <property type="generic name" value="Sulbactam"/>
</dbReference>
<dbReference type="DrugBank" id="DB00605">
    <property type="generic name" value="Sulindac"/>
</dbReference>
<dbReference type="DrugBank" id="DB11644">
    <property type="generic name" value="Tafamidis"/>
</dbReference>
<dbReference type="DrugBank" id="DB04348">
    <property type="generic name" value="Taurocholic acid"/>
</dbReference>
<dbReference type="DrugBank" id="DB01606">
    <property type="generic name" value="Tazobactam"/>
</dbReference>
<dbReference type="DrugBank" id="DB14126">
    <property type="generic name" value="Tenofovir"/>
</dbReference>
<dbReference type="DrugBank" id="DB09299">
    <property type="generic name" value="Tenofovir alafenamide"/>
</dbReference>
<dbReference type="DrugBank" id="DB00300">
    <property type="generic name" value="Tenofovir disoproxil"/>
</dbReference>
<dbReference type="DrugBank" id="DB00759">
    <property type="generic name" value="Tetracycline"/>
</dbReference>
<dbReference type="DrugBank" id="DB11712">
    <property type="generic name" value="Tezacaftor"/>
</dbReference>
<dbReference type="DrugBank" id="DB01124">
    <property type="generic name" value="Tolbutamide"/>
</dbReference>
<dbReference type="DrugBank" id="DB00500">
    <property type="generic name" value="Tolmetin"/>
</dbReference>
<dbReference type="DrugBank" id="DB01685">
    <property type="generic name" value="Topiroxostat"/>
</dbReference>
<dbReference type="DrugBank" id="DB00432">
    <property type="generic name" value="Trifluridine"/>
</dbReference>
<dbReference type="DrugBank" id="DB15328">
    <property type="generic name" value="Ubrogepant"/>
</dbReference>
<dbReference type="DrugBank" id="DB08844">
    <property type="generic name" value="Uric acid"/>
</dbReference>
<dbReference type="DrugBank" id="DB12255">
    <property type="generic name" value="Vadadustat"/>
</dbReference>
<dbReference type="DrugBank" id="DB00577">
    <property type="generic name" value="Valaciclovir"/>
</dbReference>
<dbReference type="DrugBank" id="DB00313">
    <property type="generic name" value="Valproic acid"/>
</dbReference>
<dbReference type="DrugBank" id="DB00943">
    <property type="generic name" value="Zalcitabine"/>
</dbReference>
<dbReference type="DrugBank" id="DB00495">
    <property type="generic name" value="Zidovudine"/>
</dbReference>
<dbReference type="DrugCentral" id="Q4U2R8"/>
<dbReference type="GuidetoPHARMACOLOGY" id="1025"/>
<dbReference type="TCDB" id="2.A.1.19.31">
    <property type="family name" value="the major facilitator superfamily (mfs)"/>
</dbReference>
<dbReference type="GlyCosmos" id="Q4U2R8">
    <property type="glycosylation" value="5 sites, No reported glycans"/>
</dbReference>
<dbReference type="GlyGen" id="Q4U2R8">
    <property type="glycosylation" value="5 sites"/>
</dbReference>
<dbReference type="iPTMnet" id="Q4U2R8"/>
<dbReference type="PhosphoSitePlus" id="Q4U2R8"/>
<dbReference type="BioMuta" id="SLC22A6"/>
<dbReference type="DMDM" id="74762955"/>
<dbReference type="MassIVE" id="Q4U2R8"/>
<dbReference type="PaxDb" id="9606-ENSP00000367102"/>
<dbReference type="PeptideAtlas" id="Q4U2R8"/>
<dbReference type="ProteomicsDB" id="62263">
    <molecule id="Q4U2R8-1"/>
</dbReference>
<dbReference type="ProteomicsDB" id="62264">
    <molecule id="Q4U2R8-2"/>
</dbReference>
<dbReference type="ProteomicsDB" id="62265">
    <molecule id="Q4U2R8-3"/>
</dbReference>
<dbReference type="ProteomicsDB" id="62266">
    <molecule id="Q4U2R8-4"/>
</dbReference>
<dbReference type="Antibodypedia" id="28866">
    <property type="antibodies" value="280 antibodies from 32 providers"/>
</dbReference>
<dbReference type="DNASU" id="9356"/>
<dbReference type="Ensembl" id="ENST00000360421.9">
    <molecule id="Q4U2R8-2"/>
    <property type="protein sequence ID" value="ENSP00000353597.4"/>
    <property type="gene ID" value="ENSG00000197901.12"/>
</dbReference>
<dbReference type="Ensembl" id="ENST00000377871.7">
    <molecule id="Q4U2R8-1"/>
    <property type="protein sequence ID" value="ENSP00000367102.3"/>
    <property type="gene ID" value="ENSG00000197901.12"/>
</dbReference>
<dbReference type="Ensembl" id="ENST00000421062.2">
    <molecule id="Q4U2R8-4"/>
    <property type="protein sequence ID" value="ENSP00000404441.2"/>
    <property type="gene ID" value="ENSG00000197901.12"/>
</dbReference>
<dbReference type="Ensembl" id="ENST00000458333.6">
    <molecule id="Q4U2R8-3"/>
    <property type="protein sequence ID" value="ENSP00000396401.2"/>
    <property type="gene ID" value="ENSG00000197901.12"/>
</dbReference>
<dbReference type="GeneID" id="9356"/>
<dbReference type="KEGG" id="hsa:9356"/>
<dbReference type="MANE-Select" id="ENST00000360421.9">
    <molecule id="Q4U2R8-2"/>
    <property type="protein sequence ID" value="ENSP00000353597.4"/>
    <property type="RefSeq nucleotide sequence ID" value="NM_153276.3"/>
    <property type="RefSeq protein sequence ID" value="NP_695008.1"/>
</dbReference>
<dbReference type="UCSC" id="uc001nwj.4">
    <molecule id="Q4U2R8-1"/>
    <property type="organism name" value="human"/>
</dbReference>
<dbReference type="AGR" id="HGNC:10970"/>
<dbReference type="CTD" id="9356"/>
<dbReference type="DisGeNET" id="9356"/>
<dbReference type="GeneCards" id="SLC22A6"/>
<dbReference type="HGNC" id="HGNC:10970">
    <property type="gene designation" value="SLC22A6"/>
</dbReference>
<dbReference type="HPA" id="ENSG00000197901">
    <property type="expression patterns" value="Tissue enriched (kidney)"/>
</dbReference>
<dbReference type="MIM" id="607582">
    <property type="type" value="gene"/>
</dbReference>
<dbReference type="neXtProt" id="NX_Q4U2R8"/>
<dbReference type="OpenTargets" id="ENSG00000197901"/>
<dbReference type="PharmGKB" id="PA388"/>
<dbReference type="VEuPathDB" id="HostDB:ENSG00000197901"/>
<dbReference type="eggNOG" id="KOG0255">
    <property type="taxonomic scope" value="Eukaryota"/>
</dbReference>
<dbReference type="GeneTree" id="ENSGT00940000157004"/>
<dbReference type="HOGENOM" id="CLU_001265_33_3_1"/>
<dbReference type="InParanoid" id="Q4U2R8"/>
<dbReference type="OMA" id="WHCTGAS"/>
<dbReference type="OrthoDB" id="2544694at2759"/>
<dbReference type="PAN-GO" id="Q4U2R8">
    <property type="GO annotations" value="2 GO annotations based on evolutionary models"/>
</dbReference>
<dbReference type="PhylomeDB" id="Q4U2R8"/>
<dbReference type="TreeFam" id="TF315847"/>
<dbReference type="PathwayCommons" id="Q4U2R8"/>
<dbReference type="Reactome" id="R-HSA-561048">
    <property type="pathway name" value="Organic anion transport"/>
</dbReference>
<dbReference type="SABIO-RK" id="Q4U2R8"/>
<dbReference type="SignaLink" id="Q4U2R8"/>
<dbReference type="BioGRID-ORCS" id="9356">
    <property type="hits" value="9 hits in 1157 CRISPR screens"/>
</dbReference>
<dbReference type="ChiTaRS" id="SLC22A6">
    <property type="organism name" value="human"/>
</dbReference>
<dbReference type="GeneWiki" id="Organic_anion_transporter_1"/>
<dbReference type="GenomeRNAi" id="9356"/>
<dbReference type="Pharos" id="Q4U2R8">
    <property type="development level" value="Tclin"/>
</dbReference>
<dbReference type="PRO" id="PR:Q4U2R8"/>
<dbReference type="Proteomes" id="UP000005640">
    <property type="component" value="Chromosome 11"/>
</dbReference>
<dbReference type="RNAct" id="Q4U2R8">
    <property type="molecule type" value="protein"/>
</dbReference>
<dbReference type="Bgee" id="ENSG00000197901">
    <property type="expression patterns" value="Expressed in adult mammalian kidney and 47 other cell types or tissues"/>
</dbReference>
<dbReference type="ExpressionAtlas" id="Q4U2R8">
    <property type="expression patterns" value="baseline and differential"/>
</dbReference>
<dbReference type="GO" id="GO:0009925">
    <property type="term" value="C:basal plasma membrane"/>
    <property type="evidence" value="ECO:0000314"/>
    <property type="project" value="UniProtKB"/>
</dbReference>
<dbReference type="GO" id="GO:0016323">
    <property type="term" value="C:basolateral plasma membrane"/>
    <property type="evidence" value="ECO:0000314"/>
    <property type="project" value="UniProtKB"/>
</dbReference>
<dbReference type="GO" id="GO:0005901">
    <property type="term" value="C:caveola"/>
    <property type="evidence" value="ECO:0007669"/>
    <property type="project" value="Ensembl"/>
</dbReference>
<dbReference type="GO" id="GO:0070062">
    <property type="term" value="C:extracellular exosome"/>
    <property type="evidence" value="ECO:0007005"/>
    <property type="project" value="UniProtKB"/>
</dbReference>
<dbReference type="GO" id="GO:0005886">
    <property type="term" value="C:plasma membrane"/>
    <property type="evidence" value="ECO:0000314"/>
    <property type="project" value="UniProtKB"/>
</dbReference>
<dbReference type="GO" id="GO:0032991">
    <property type="term" value="C:protein-containing complex"/>
    <property type="evidence" value="ECO:0007669"/>
    <property type="project" value="Ensembl"/>
</dbReference>
<dbReference type="GO" id="GO:0015139">
    <property type="term" value="F:alpha-ketoglutarate transmembrane transporter activity"/>
    <property type="evidence" value="ECO:0000314"/>
    <property type="project" value="UniProtKB"/>
</dbReference>
<dbReference type="GO" id="GO:0015297">
    <property type="term" value="F:antiporter activity"/>
    <property type="evidence" value="ECO:0000314"/>
    <property type="project" value="UniProtKB"/>
</dbReference>
<dbReference type="GO" id="GO:0031404">
    <property type="term" value="F:chloride ion binding"/>
    <property type="evidence" value="ECO:0007669"/>
    <property type="project" value="Ensembl"/>
</dbReference>
<dbReference type="GO" id="GO:0042802">
    <property type="term" value="F:identical protein binding"/>
    <property type="evidence" value="ECO:0007669"/>
    <property type="project" value="Ensembl"/>
</dbReference>
<dbReference type="GO" id="GO:0008514">
    <property type="term" value="F:organic anion transmembrane transporter activity"/>
    <property type="evidence" value="ECO:0000314"/>
    <property type="project" value="UniProtKB"/>
</dbReference>
<dbReference type="GO" id="GO:0015132">
    <property type="term" value="F:prostaglandin transmembrane transporter activity"/>
    <property type="evidence" value="ECO:0000314"/>
    <property type="project" value="UniProtKB"/>
</dbReference>
<dbReference type="GO" id="GO:0015347">
    <property type="term" value="F:sodium-independent organic anion transmembrane transporter activity"/>
    <property type="evidence" value="ECO:0000314"/>
    <property type="project" value="UniProtKB"/>
</dbReference>
<dbReference type="GO" id="GO:0005452">
    <property type="term" value="F:solute:inorganic anion antiporter activity"/>
    <property type="evidence" value="ECO:0000314"/>
    <property type="project" value="UniProtKB"/>
</dbReference>
<dbReference type="GO" id="GO:0022857">
    <property type="term" value="F:transmembrane transporter activity"/>
    <property type="evidence" value="ECO:0000314"/>
    <property type="project" value="UniProtKB"/>
</dbReference>
<dbReference type="GO" id="GO:0042910">
    <property type="term" value="F:xenobiotic transmembrane transporter activity"/>
    <property type="evidence" value="ECO:0000314"/>
    <property type="project" value="UniProtKB"/>
</dbReference>
<dbReference type="GO" id="GO:0015742">
    <property type="term" value="P:alpha-ketoglutarate transport"/>
    <property type="evidence" value="ECO:0000314"/>
    <property type="project" value="UniProtKB"/>
</dbReference>
<dbReference type="GO" id="GO:0072237">
    <property type="term" value="P:metanephric proximal tubule development"/>
    <property type="evidence" value="ECO:0007669"/>
    <property type="project" value="Ensembl"/>
</dbReference>
<dbReference type="GO" id="GO:0006820">
    <property type="term" value="P:monoatomic anion transport"/>
    <property type="evidence" value="ECO:0007669"/>
    <property type="project" value="Ensembl"/>
</dbReference>
<dbReference type="GO" id="GO:0015711">
    <property type="term" value="P:organic anion transport"/>
    <property type="evidence" value="ECO:0000314"/>
    <property type="project" value="UniProtKB"/>
</dbReference>
<dbReference type="GO" id="GO:0015732">
    <property type="term" value="P:prostaglandin transport"/>
    <property type="evidence" value="ECO:0000314"/>
    <property type="project" value="UniProtKB"/>
</dbReference>
<dbReference type="GO" id="GO:0097254">
    <property type="term" value="P:renal tubular secretion"/>
    <property type="evidence" value="ECO:0000315"/>
    <property type="project" value="UniProtKB"/>
</dbReference>
<dbReference type="GO" id="GO:0043252">
    <property type="term" value="P:sodium-independent organic anion transport"/>
    <property type="evidence" value="ECO:0000314"/>
    <property type="project" value="UniProtKB"/>
</dbReference>
<dbReference type="CDD" id="cd17446">
    <property type="entry name" value="MFS_SLC22A6_OAT1_like"/>
    <property type="match status" value="1"/>
</dbReference>
<dbReference type="FunFam" id="1.20.1250.20:FF:000023">
    <property type="entry name" value="Solute carrier family 22 member 6"/>
    <property type="match status" value="1"/>
</dbReference>
<dbReference type="Gene3D" id="1.20.1250.20">
    <property type="entry name" value="MFS general substrate transporter like domains"/>
    <property type="match status" value="1"/>
</dbReference>
<dbReference type="InterPro" id="IPR020846">
    <property type="entry name" value="MFS_dom"/>
</dbReference>
<dbReference type="InterPro" id="IPR005828">
    <property type="entry name" value="MFS_sugar_transport-like"/>
</dbReference>
<dbReference type="InterPro" id="IPR036259">
    <property type="entry name" value="MFS_trans_sf"/>
</dbReference>
<dbReference type="InterPro" id="IPR004749">
    <property type="entry name" value="Orgcat_transp/SVOP"/>
</dbReference>
<dbReference type="NCBIfam" id="TIGR00898">
    <property type="entry name" value="2A0119"/>
    <property type="match status" value="1"/>
</dbReference>
<dbReference type="PANTHER" id="PTHR24064">
    <property type="entry name" value="SOLUTE CARRIER FAMILY 22 MEMBER"/>
    <property type="match status" value="1"/>
</dbReference>
<dbReference type="Pfam" id="PF00083">
    <property type="entry name" value="Sugar_tr"/>
    <property type="match status" value="1"/>
</dbReference>
<dbReference type="SUPFAM" id="SSF103473">
    <property type="entry name" value="MFS general substrate transporter"/>
    <property type="match status" value="1"/>
</dbReference>
<dbReference type="PROSITE" id="PS50850">
    <property type="entry name" value="MFS"/>
    <property type="match status" value="1"/>
</dbReference>
<feature type="chain" id="PRO_0000324166" description="Solute carrier family 22 member 6">
    <location>
        <begin position="1"/>
        <end position="563"/>
    </location>
</feature>
<feature type="topological domain" description="Cytoplasmic" evidence="3">
    <location>
        <begin position="1"/>
        <end position="9"/>
    </location>
</feature>
<feature type="transmembrane region" description="Helical" evidence="3">
    <location>
        <begin position="10"/>
        <end position="30"/>
    </location>
</feature>
<feature type="topological domain" description="Extracellular" evidence="3">
    <location>
        <begin position="31"/>
        <end position="135"/>
    </location>
</feature>
<feature type="transmembrane region" description="Helical" evidence="3">
    <location>
        <begin position="136"/>
        <end position="156"/>
    </location>
</feature>
<feature type="topological domain" description="Cytoplasmic" evidence="3">
    <location>
        <begin position="157"/>
        <end position="164"/>
    </location>
</feature>
<feature type="transmembrane region" description="Helical" evidence="3">
    <location>
        <begin position="165"/>
        <end position="187"/>
    </location>
</feature>
<feature type="topological domain" description="Extracellular" evidence="3">
    <location>
        <begin position="188"/>
        <end position="190"/>
    </location>
</feature>
<feature type="transmembrane region" description="Helical" evidence="3">
    <location>
        <begin position="191"/>
        <end position="213"/>
    </location>
</feature>
<feature type="topological domain" description="Cytoplasmic" evidence="3">
    <location>
        <begin position="214"/>
        <end position="224"/>
    </location>
</feature>
<feature type="transmembrane region" description="Helical" evidence="3">
    <location>
        <begin position="225"/>
        <end position="245"/>
    </location>
</feature>
<feature type="topological domain" description="Extracellular" evidence="3">
    <location>
        <begin position="246"/>
        <end position="248"/>
    </location>
</feature>
<feature type="transmembrane region" description="Helical" evidence="3">
    <location>
        <begin position="249"/>
        <end position="269"/>
    </location>
</feature>
<feature type="topological domain" description="Cytoplasmic" evidence="3">
    <location>
        <begin position="270"/>
        <end position="337"/>
    </location>
</feature>
<feature type="transmembrane region" description="Helical" evidence="3">
    <location>
        <begin position="338"/>
        <end position="358"/>
    </location>
</feature>
<feature type="topological domain" description="Extracellular" evidence="3">
    <location>
        <begin position="359"/>
        <end position="368"/>
    </location>
</feature>
<feature type="transmembrane region" description="Helical" evidence="3">
    <location>
        <begin position="369"/>
        <end position="389"/>
    </location>
</feature>
<feature type="topological domain" description="Cytoplasmic" evidence="3">
    <location>
        <begin position="390"/>
        <end position="395"/>
    </location>
</feature>
<feature type="transmembrane region" description="Helical" evidence="3">
    <location>
        <begin position="396"/>
        <end position="416"/>
    </location>
</feature>
<feature type="topological domain" description="Extracellular" evidence="3">
    <location>
        <begin position="417"/>
        <end position="425"/>
    </location>
</feature>
<feature type="transmembrane region" description="Helical" evidence="3">
    <location>
        <begin position="426"/>
        <end position="446"/>
    </location>
</feature>
<feature type="topological domain" description="Cytoplasmic" evidence="3">
    <location>
        <begin position="447"/>
        <end position="455"/>
    </location>
</feature>
<feature type="transmembrane region" description="Helical" evidence="3">
    <location>
        <begin position="456"/>
        <end position="475"/>
    </location>
</feature>
<feature type="topological domain" description="Extracellular" evidence="3">
    <location>
        <begin position="476"/>
        <end position="484"/>
    </location>
</feature>
<feature type="transmembrane region" description="Helical" evidence="3">
    <location>
        <begin position="485"/>
        <end position="505"/>
    </location>
</feature>
<feature type="topological domain" description="Cytoplasmic" evidence="3">
    <location>
        <begin position="506"/>
        <end position="563"/>
    </location>
</feature>
<feature type="region of interest" description="Disordered" evidence="4">
    <location>
        <begin position="525"/>
        <end position="563"/>
    </location>
</feature>
<feature type="site" description="Important for interaction with cidofovir">
    <location>
        <position position="230"/>
    </location>
</feature>
<feature type="site" description="Important for interaction with cidofovir and PAH">
    <location>
        <position position="438"/>
    </location>
</feature>
<feature type="glycosylation site" description="N-linked (GlcNAc...) asparagine" evidence="12">
    <location>
        <position position="39"/>
    </location>
</feature>
<feature type="glycosylation site" description="N-linked (GlcNAc...) asparagine" evidence="12">
    <location>
        <position position="56"/>
    </location>
</feature>
<feature type="glycosylation site" description="N-linked (GlcNAc...) asparagine" evidence="12">
    <location>
        <position position="92"/>
    </location>
</feature>
<feature type="glycosylation site" description="N-linked (GlcNAc...) asparagine" evidence="12">
    <location>
        <position position="97"/>
    </location>
</feature>
<feature type="glycosylation site" description="N-linked (GlcNAc...) asparagine" evidence="6">
    <location>
        <position position="113"/>
    </location>
</feature>
<feature type="splice variant" id="VSP_032168" description="In isoform 3 and isoform 4." evidence="30">
    <location>
        <begin position="455"/>
        <end position="498"/>
    </location>
</feature>
<feature type="splice variant" id="VSP_032169" description="In isoform 2 and isoform 3." evidence="28 29 30 31 33 34 35">
    <location>
        <begin position="523"/>
        <end position="535"/>
    </location>
</feature>
<feature type="sequence variant" id="VAR_039682" description="In dbSNP:rs1415632329." evidence="16">
    <original>L</original>
    <variation>P</variation>
    <location>
        <position position="7"/>
    </location>
</feature>
<feature type="sequence variant" id="VAR_039683" description="Lower Vmax; increase in substrate affinity and increase in the affinity for the nucleoside phosphonate analogs cidofovir, adefovir and tenofovir; dbSNP:rs11568626." evidence="15 16">
    <original>R</original>
    <variation>H</variation>
    <location>
        <position position="50"/>
    </location>
</feature>
<feature type="sequence variant" id="VAR_047878" description="In dbSNP:rs11568627." evidence="27">
    <original>P</original>
    <variation>L</variation>
    <location>
        <position position="104"/>
    </location>
</feature>
<feature type="sequence variant" id="VAR_039684" description="Increase in substrate affinity; dbSNP:rs45607933.">
    <original>R</original>
    <variation>W</variation>
    <location>
        <position position="293"/>
    </location>
</feature>
<feature type="mutagenesis site" description="Complete loss of PAH transport activity." evidence="13">
    <original>L</original>
    <variation>A</variation>
    <location>
        <position position="30"/>
    </location>
</feature>
<feature type="mutagenesis site" description="Complete loss of PAH transport activity." evidence="13">
    <original>T</original>
    <variation>A</variation>
    <location>
        <position position="36"/>
    </location>
</feature>
<feature type="mutagenesis site" description="Complete loss of PAH transport activity." evidence="12">
    <original>N</original>
    <variation>Q</variation>
    <location>
        <position position="39"/>
    </location>
</feature>
<feature type="mutagenesis site" description="Loss of membrane protein expression and little uptake of cidofovir." evidence="17">
    <original>Y</original>
    <variation>A</variation>
    <location>
        <position position="230"/>
    </location>
</feature>
<feature type="mutagenesis site" description="Decrease in the level of membrane protein expression and 70 % loss of PAH uptake." evidence="17">
    <original>K</original>
    <variation>A</variation>
    <location>
        <position position="431"/>
    </location>
</feature>
<feature type="mutagenesis site" description="Decrease in the level of membrane protein expression, 70 % loss of PAH uptake, increased affinity for cidofovir, lower Vmax for PAH, and lower Km and Vmax for cidofovir." evidence="17">
    <original>F</original>
    <variation>A</variation>
    <location>
        <position position="438"/>
    </location>
</feature>
<feature type="sequence conflict" description="In Ref. 3; AAD10052." evidence="36" ref="3">
    <original>G</original>
    <variation>S</variation>
    <location>
        <position position="14"/>
    </location>
</feature>
<feature type="sequence conflict" description="In Ref. 1; AAC70004." evidence="36" ref="1">
    <original>L</original>
    <variation>F</variation>
    <location>
        <position position="563"/>
    </location>
</feature>
<keyword id="KW-0025">Alternative splicing</keyword>
<keyword id="KW-1003">Cell membrane</keyword>
<keyword id="KW-0325">Glycoprotein</keyword>
<keyword id="KW-0472">Membrane</keyword>
<keyword id="KW-1267">Proteomics identification</keyword>
<keyword id="KW-1185">Reference proteome</keyword>
<keyword id="KW-0812">Transmembrane</keyword>
<keyword id="KW-1133">Transmembrane helix</keyword>
<organism>
    <name type="scientific">Homo sapiens</name>
    <name type="common">Human</name>
    <dbReference type="NCBI Taxonomy" id="9606"/>
    <lineage>
        <taxon>Eukaryota</taxon>
        <taxon>Metazoa</taxon>
        <taxon>Chordata</taxon>
        <taxon>Craniata</taxon>
        <taxon>Vertebrata</taxon>
        <taxon>Euteleostomi</taxon>
        <taxon>Mammalia</taxon>
        <taxon>Eutheria</taxon>
        <taxon>Euarchontoglires</taxon>
        <taxon>Primates</taxon>
        <taxon>Haplorrhini</taxon>
        <taxon>Catarrhini</taxon>
        <taxon>Hominidae</taxon>
        <taxon>Homo</taxon>
    </lineage>
</organism>
<name>S22A6_HUMAN</name>
<comment type="function">
    <text evidence="8 9 11 19 20 21 22 23 25 26">Secondary active transporter that functions as a Na(+)-independent organic anion (OA)/dicarboxylate antiporter where the uptake of one molecule of OA into the cell is coupled with an efflux of one molecule of intracellular dicarboxylate such as 2-oxoglutarate or glutarate (PubMed:11669456, PubMed:11907186, PubMed:14675047, PubMed:22108572, PubMed:23832370, PubMed:28534121, PubMed:9950961). Mediates the uptake of OA across the basolateral side of proximal tubule epithelial cells, thereby contributing to the renal elimination of endogenous OA from the systemic circulation into the urine (PubMed:9887087). Functions as a biopterin transporters involved in the uptake and the secretion of coenzymes tetrahydrobiopterin (BH4), dihydrobiopterin (BH2) and sepiapterin to urine, thereby determining baseline levels of blood biopterins (PubMed:28534121). Transports prostaglandin E2 (PGE2) and prostaglandin F2-alpha (PGF2-alpha) and may contribute to their renal excretion (PubMed:11907186). Also mediates the uptake of cyclic nucleotides such as cAMP and cGMP (PubMed:26377792). Involved in the transport of neuroactive tryptophan metabolites kynurenate (KYNA) and xanthurenate (XA) and may contribute to their secretion from the brain (PubMed:22108572, PubMed:23832370). May transport glutamate (PubMed:26377792). Also involved in the disposition of uremic toxins and potentially toxic xenobiotics by the renal organic anion secretory pathway, helping reduce their undesired toxicological effects on the body (PubMed:11669456, PubMed:14675047). Uremic toxins include the indoxyl sulfate (IS), hippurate/N-benzoylglycine (HA), indole acetate (IA), 3-carboxy-4- methyl-5-propyl-2-furanpropionate (CMPF) and urate (PubMed:14675047, PubMed:26377792). Xenobiotics include the mycotoxin ochratoxin (OTA) (PubMed:11669456). May also contribute to the transport of organic compounds in testes across the blood-testis-barrier (PubMed:35307651).</text>
</comment>
<comment type="catalytic activity">
    <reaction evidence="22">
        <text>(6R)-L-erythro-5,6,7,8-tetrahydrobiopterin(out) + a dicarboxylate(in) = (6R)-L-erythro-5,6,7,8-tetrahydrobiopterin(in) + a dicarboxylate(out)</text>
        <dbReference type="Rhea" id="RHEA:76071"/>
        <dbReference type="ChEBI" id="CHEBI:28965"/>
        <dbReference type="ChEBI" id="CHEBI:59560"/>
    </reaction>
</comment>
<comment type="catalytic activity">
    <reaction evidence="22">
        <text>L-erythro-7,8-dihydrobiopterin(out) + a dicarboxylate(in) = L-erythro-7,8-dihydrobiopterin(in) + a dicarboxylate(out)</text>
        <dbReference type="Rhea" id="RHEA:76075"/>
        <dbReference type="ChEBI" id="CHEBI:28965"/>
        <dbReference type="ChEBI" id="CHEBI:43029"/>
    </reaction>
</comment>
<comment type="catalytic activity">
    <reaction evidence="22">
        <text>L-sepiapterin(out) + a dicarboxylate(in) = L-sepiapterin(in) + a dicarboxylate(out)</text>
        <dbReference type="Rhea" id="RHEA:76079"/>
        <dbReference type="ChEBI" id="CHEBI:28965"/>
        <dbReference type="ChEBI" id="CHEBI:194527"/>
    </reaction>
</comment>
<comment type="catalytic activity">
    <reaction evidence="9">
        <text>prostaglandin F2alpha(out) + a dicarboxylate(in) = prostaglandin F2alpha(in) + a dicarboxylate(out)</text>
        <dbReference type="Rhea" id="RHEA:76119"/>
        <dbReference type="ChEBI" id="CHEBI:28965"/>
        <dbReference type="ChEBI" id="CHEBI:57404"/>
    </reaction>
</comment>
<comment type="catalytic activity">
    <reaction evidence="9">
        <text>prostaglandin E2(out) + a dicarboxylate(in) = prostaglandin E2(in) + a dicarboxylate(out)</text>
        <dbReference type="Rhea" id="RHEA:76123"/>
        <dbReference type="ChEBI" id="CHEBI:28965"/>
        <dbReference type="ChEBI" id="CHEBI:606564"/>
    </reaction>
</comment>
<comment type="catalytic activity">
    <reaction evidence="1">
        <text>3',5'-cyclic AMP(out) + a dicarboxylate(in) = 3',5'-cyclic AMP(in) + a dicarboxylate(out)</text>
        <dbReference type="Rhea" id="RHEA:76127"/>
        <dbReference type="ChEBI" id="CHEBI:28965"/>
        <dbReference type="ChEBI" id="CHEBI:58165"/>
    </reaction>
</comment>
<comment type="catalytic activity">
    <reaction evidence="1">
        <text>3',5'-cyclic GMP(out) + a dicarboxylate(in) = 3',5'-cyclic GMP(in) + a dicarboxylate(out)</text>
        <dbReference type="Rhea" id="RHEA:76131"/>
        <dbReference type="ChEBI" id="CHEBI:28965"/>
        <dbReference type="ChEBI" id="CHEBI:57746"/>
    </reaction>
</comment>
<comment type="catalytic activity">
    <reaction evidence="1">
        <text>urate(out) + a dicarboxylate(in) = urate(in) + a dicarboxylate(out)</text>
        <dbReference type="Rhea" id="RHEA:76135"/>
        <dbReference type="ChEBI" id="CHEBI:17775"/>
        <dbReference type="ChEBI" id="CHEBI:28965"/>
    </reaction>
</comment>
<comment type="catalytic activity">
    <reaction evidence="19 20">
        <text>kynurenate(out) + glutarate(in) = kynurenate(in) + glutarate(out)</text>
        <dbReference type="Rhea" id="RHEA:75999"/>
        <dbReference type="ChEBI" id="CHEBI:30921"/>
        <dbReference type="ChEBI" id="CHEBI:58454"/>
    </reaction>
</comment>
<comment type="catalytic activity">
    <reaction evidence="11">
        <text>(indol-3-yl)acetate(out) + a dicarboxylate(in) = (indol-3-yl)acetate(in) + a dicarboxylate(out)</text>
        <dbReference type="Rhea" id="RHEA:75983"/>
        <dbReference type="ChEBI" id="CHEBI:28965"/>
        <dbReference type="ChEBI" id="CHEBI:30854"/>
    </reaction>
</comment>
<comment type="catalytic activity">
    <reaction evidence="11">
        <text>indoxyl sulfate(out) + a dicarboxylate(in) = indoxyl sulfate(in) + a dicarboxylate(out)</text>
        <dbReference type="Rhea" id="RHEA:75987"/>
        <dbReference type="ChEBI" id="CHEBI:28965"/>
        <dbReference type="ChEBI" id="CHEBI:144643"/>
    </reaction>
</comment>
<comment type="catalytic activity">
    <reaction evidence="11">
        <text>N-benzoylglycine(out) + a dicarboxylate(in) = N-benzoylglycine(in) + a dicarboxylate(out)</text>
        <dbReference type="Rhea" id="RHEA:75991"/>
        <dbReference type="ChEBI" id="CHEBI:28965"/>
        <dbReference type="ChEBI" id="CHEBI:606565"/>
    </reaction>
</comment>
<comment type="catalytic activity">
    <reaction evidence="11">
        <text>3-carboxy-4-methyl-5-propyl-2-furanpropanoate(out) + a dicarboxylate(in) = 3-carboxy-4-methyl-5-propyl-2-furanpropanoate(in) + a dicarboxylate(out)</text>
        <dbReference type="Rhea" id="RHEA:75995"/>
        <dbReference type="ChEBI" id="CHEBI:28965"/>
        <dbReference type="ChEBI" id="CHEBI:194524"/>
    </reaction>
</comment>
<comment type="biophysicochemical properties">
    <kinetics>
        <KM evidence="9">970 nM for prostaglandin E2</KM>
        <KM evidence="9">575 nM for prostaglandin F2-alpha</KM>
        <KM evidence="11">23.5 uM for hippurate/N-benzoylglycine</KM>
        <KM evidence="11">14 uM for indole acetate</KM>
        <KM evidence="11">20.5 uM for indoxyl sulfate</KM>
        <KM evidence="11">141 uM for 3-carboxy-4- methyl-5-propyl-2-furanpropionate</KM>
        <KM evidence="20">4.83 uM for xanthurenate</KM>
        <KM evidence="19">5.06 uM for kynurenate</KM>
        <KM evidence="8">0.42 uM for ochratoxin A</KM>
        <Vmax evidence="11">430.0 pmol/min/mg enzyme for hippurate/N-benzoylglycine uptake</Vmax>
        <Vmax evidence="11">110.0 pmol/min/mg enzyme for indole acetate uptake</Vmax>
        <Vmax evidence="11">216.0 pmol/min/mg enzyme for indoxyl sulfate uptake</Vmax>
        <Vmax evidence="11">801.0 pmol/min/mg enzyme for 3-carboxy-4- methyl-5-propyl-2-furanpropionate uptake</Vmax>
    </kinetics>
</comment>
<comment type="interaction">
    <interactant intactId="EBI-749741">
        <id>Q4U2R8</id>
    </interactant>
    <interactant intactId="EBI-743771">
        <id>Q92624</id>
        <label>APPBP2</label>
    </interactant>
    <organismsDiffer>false</organismsDiffer>
    <experiments>3</experiments>
</comment>
<comment type="subcellular location">
    <subcellularLocation>
        <location evidence="25">Basolateral cell membrane</location>
        <topology evidence="36">Multi-pass membrane protein</topology>
    </subcellularLocation>
    <subcellularLocation>
        <location evidence="23">Basal cell membrane</location>
        <topology evidence="36">Multi-pass membrane protein</topology>
    </subcellularLocation>
    <text evidence="23 25">Localized to the basolateral membrane of renal proximal tubular cells (PubMed:9887087). Localized to the basal membrane of Sertoli cells (PubMed:35307651).</text>
</comment>
<comment type="alternative products">
    <event type="alternative splicing"/>
    <isoform>
        <id>Q4U2R8-1</id>
        <name>1</name>
        <name>OAT1-1</name>
        <sequence type="displayed"/>
    </isoform>
    <isoform>
        <id>Q4U2R8-2</id>
        <name>2</name>
        <name>OAT1-2</name>
        <sequence type="described" ref="VSP_032169"/>
    </isoform>
    <isoform>
        <id>Q4U2R8-3</id>
        <name>3</name>
        <name>OAT1-3</name>
        <sequence type="described" ref="VSP_032168 VSP_032169"/>
    </isoform>
    <isoform>
        <id>Q4U2R8-4</id>
        <name>4</name>
        <name>OAT1-4</name>
        <sequence type="described" ref="VSP_032168"/>
    </isoform>
</comment>
<comment type="tissue specificity">
    <text evidence="5 6 7 23 25 26">Strongly expressed in kidney (PubMed:10049739, PubMed:10462545, PubMed:10964714, PubMed:9887087, PubMed:9950961). Expressed at lower level in liver, skeletal muscle, brain and placenta (PubMed:10049739, PubMed:10462545, PubMed:9887087, PubMed:9950961). In kidney, found at the basolateral membrane of the proximal tubule (PubMed:9887087). In testis, primarily localized to the basal membrane of Sertoli cells and weakly expressed in Leydig cells and vascular endothelial cells (PubMed:35307651).</text>
</comment>
<comment type="domain">
    <text evidence="2">Multiple cysteine residues are necessary for proper targeting to the plasma membrane.</text>
</comment>
<comment type="PTM">
    <text evidence="6 12">Glycosylated. Glycosylation at Asn-113 may occur at a secondary level. Glycosylation is necessary for proper targeting of the transporter to the plasma membrane.</text>
</comment>
<comment type="miscellaneous">
    <text evidence="6 10 14 15 17 18 20 21 24 25 26">Involved in the renal transport of a variety of drugs with well-known nephrotoxic potential, therefore may play a role in the etiology of the drug-associated nephrotoxicity (PubMed:10462545, PubMed:12538807). Uptakes the diagnostic agent PAH/para-aminohippurate and clinically used drugs (PubMed:10462545, PubMed:12538807, PubMed:15644426, PubMed:15914676, PubMed:17038320, PubMed:17502342, PubMed:23832370, PubMed:26377792, PubMed:9762842, PubMed:9887087). Mediates the pH- and chloride-dependent bidirectional transport of PAH/para-aminohippurate in exchange for 2-oxoglutarate or glutarate as counteranions (PubMed:15644426, PubMed:26377792, PubMed:9950961). Can also mediate PAH/cGMP exchange (PubMed:26377792).</text>
</comment>
<comment type="similarity">
    <text evidence="36">Belongs to the major facilitator (TC 2.A.1) superfamily. Organic cation transporter (TC 2.A.1.19) family.</text>
</comment>
<sequence length="563" mass="61816">MAFNDLLQQVGGVGRFQQIQVTLVVLPLLLMASHNTLQNFTAAIPTHHCRPPADANLSKNGGLEVWLPRDRQGQPESCLRFTSPQWGLPFLNGTEANGTGATEPCTDGWIYDNSTFPSTIVTEWDLVCSHRALRQLAQSLYMVGVLLGAMVFGYLADRLGRRKVLILNYLQTAVSGTCAAFAPNFPIYCAFRLLSGMALAGISLNCMTLNVEWMPIHTRACVGTLIGYVYSLGQFLLAGVAYAVPHWRHLQLLVSAPFFAFFIYSWFFIESARWHSSSGRLDLTLRALQRVARINGKREEGAKLSMEVLRASLQKELTMGKGQASAMELLRCPTLRHLFLCLSMLWFATSFAYYGLVMDLQGFGVSIYLIQVIFGAVDLPAKLVGFLVINSLGRRPAQMAALLLAGICILLNGVIPQDQSIVRTSLAVLGKGCLAASFNCIFLYTGELYPTMIRQTGMGMGSTMARVGSIVSPLVSMTAELYPSMPLFIYGAVPVAASAVTVLLPETLGQPLPDTVQDLESRWAPTQKEAGIYPRKGKQTRQQQEHQKYMVPLQASAQEKNGL</sequence>
<proteinExistence type="evidence at protein level"/>